<sequence>MSEEVSKNLSETLFVKHKQAKETSALTQYMPTSQSLLDEIKEKNGFSWYRNLRRLQWVWQGVDPIEQEQVLARIASSKHSRTDEQWLDTVMGYHSGNWAYEWTRLGMEHQKRAGEMTNEAASEALFSASLCYSIAGYPHLKSDNLAIQAQVLANSAYLEAAKKSKYIIKQLEIPFEKGKITAHLHLTNTDKPHPVVIVSAGLDSLQTDMWRLFRDHLAKHDIAMLTVDMPSVGYSSKYPLTEDYSRLHQAVLNELFSIPYVDHHRVGLIGFRFGGNAMVRLSFLEQEKIKACVILGAPIHDIFASPQKLQQMPKMYLDVLASRLGKSVVDIYSLSGQMAAWSLKVQGFLSSRKTKVPILAMSLEGDPVSPYSDNQMVAFFSTYGKAKKISSKTITQGYEQSLDLAIKWLEDELLR</sequence>
<keyword id="KW-0002">3D-structure</keyword>
<keyword id="KW-0378">Hydrolase</keyword>
<keyword id="KW-0719">Serine esterase</keyword>
<dbReference type="EC" id="3.1.1.1" evidence="1 4"/>
<dbReference type="EMBL" id="AE016795">
    <property type="protein sequence ID" value="AAO08857.1"/>
    <property type="molecule type" value="Genomic_DNA"/>
</dbReference>
<dbReference type="RefSeq" id="WP_011078432.1">
    <property type="nucleotide sequence ID" value="NC_004459.3"/>
</dbReference>
<dbReference type="PDB" id="3MVE">
    <property type="method" value="X-ray"/>
    <property type="resolution" value="2.20 A"/>
    <property type="chains" value="A/B=1-415"/>
</dbReference>
<dbReference type="PDB" id="3OUR">
    <property type="method" value="X-ray"/>
    <property type="resolution" value="2.20 A"/>
    <property type="chains" value="A/C/E/G=1-415"/>
</dbReference>
<dbReference type="PDBsum" id="3MVE"/>
<dbReference type="PDBsum" id="3OUR"/>
<dbReference type="SMR" id="Q8DF91"/>
<dbReference type="ESTHER" id="vibvy-y856">
    <property type="family name" value="Duf_1100-R"/>
</dbReference>
<dbReference type="KEGG" id="vvu:VV1_0328"/>
<dbReference type="HOGENOM" id="CLU_036819_0_0_6"/>
<dbReference type="SABIO-RK" id="Q8DF91"/>
<dbReference type="EvolutionaryTrace" id="Q8DF91"/>
<dbReference type="Proteomes" id="UP000002275">
    <property type="component" value="Chromosome 1"/>
</dbReference>
<dbReference type="GO" id="GO:0106435">
    <property type="term" value="F:carboxylesterase activity"/>
    <property type="evidence" value="ECO:0007669"/>
    <property type="project" value="UniProtKB-EC"/>
</dbReference>
<dbReference type="Gene3D" id="3.40.50.1820">
    <property type="entry name" value="alpha/beta hydrolase"/>
    <property type="match status" value="1"/>
</dbReference>
<dbReference type="HAMAP" id="MF_01063">
    <property type="entry name" value="FrsA"/>
    <property type="match status" value="1"/>
</dbReference>
<dbReference type="InterPro" id="IPR029058">
    <property type="entry name" value="AB_hydrolase_fold"/>
</dbReference>
<dbReference type="InterPro" id="IPR043423">
    <property type="entry name" value="FrsA"/>
</dbReference>
<dbReference type="InterPro" id="IPR010520">
    <property type="entry name" value="FrsA-like"/>
</dbReference>
<dbReference type="InterPro" id="IPR050261">
    <property type="entry name" value="FrsA_esterase"/>
</dbReference>
<dbReference type="NCBIfam" id="NF003460">
    <property type="entry name" value="PRK05077.1"/>
    <property type="match status" value="1"/>
</dbReference>
<dbReference type="PANTHER" id="PTHR22946">
    <property type="entry name" value="DIENELACTONE HYDROLASE DOMAIN-CONTAINING PROTEIN-RELATED"/>
    <property type="match status" value="1"/>
</dbReference>
<dbReference type="PANTHER" id="PTHR22946:SF4">
    <property type="entry name" value="ESTERASE FRSA"/>
    <property type="match status" value="1"/>
</dbReference>
<dbReference type="Pfam" id="PF06500">
    <property type="entry name" value="FrsA-like"/>
    <property type="match status" value="1"/>
</dbReference>
<dbReference type="SUPFAM" id="SSF53474">
    <property type="entry name" value="alpha/beta-Hydrolases"/>
    <property type="match status" value="1"/>
</dbReference>
<protein>
    <recommendedName>
        <fullName evidence="1 6">Esterase FrsA</fullName>
        <ecNumber evidence="1 4">3.1.1.1</ecNumber>
    </recommendedName>
</protein>
<feature type="chain" id="PRO_0000197161" description="Esterase FrsA">
    <location>
        <begin position="1"/>
        <end position="415"/>
    </location>
</feature>
<feature type="helix" evidence="9">
    <location>
        <begin position="23"/>
        <end position="25"/>
    </location>
</feature>
<feature type="helix" evidence="9">
    <location>
        <begin position="31"/>
        <end position="44"/>
    </location>
</feature>
<feature type="helix" evidence="9">
    <location>
        <begin position="52"/>
        <end position="55"/>
    </location>
</feature>
<feature type="helix" evidence="9">
    <location>
        <begin position="58"/>
        <end position="60"/>
    </location>
</feature>
<feature type="helix" evidence="9">
    <location>
        <begin position="64"/>
        <end position="76"/>
    </location>
</feature>
<feature type="strand" evidence="10">
    <location>
        <begin position="81"/>
        <end position="83"/>
    </location>
</feature>
<feature type="strand" evidence="9">
    <location>
        <begin position="92"/>
        <end position="94"/>
    </location>
</feature>
<feature type="helix" evidence="9">
    <location>
        <begin position="98"/>
        <end position="113"/>
    </location>
</feature>
<feature type="helix" evidence="9">
    <location>
        <begin position="118"/>
        <end position="136"/>
    </location>
</feature>
<feature type="helix" evidence="9">
    <location>
        <begin position="144"/>
        <end position="163"/>
    </location>
</feature>
<feature type="strand" evidence="9">
    <location>
        <begin position="165"/>
        <end position="174"/>
    </location>
</feature>
<feature type="strand" evidence="9">
    <location>
        <begin position="176"/>
        <end position="187"/>
    </location>
</feature>
<feature type="strand" evidence="9">
    <location>
        <begin position="189"/>
        <end position="191"/>
    </location>
</feature>
<feature type="strand" evidence="9">
    <location>
        <begin position="193"/>
        <end position="199"/>
    </location>
</feature>
<feature type="helix" evidence="9">
    <location>
        <begin position="206"/>
        <end position="209"/>
    </location>
</feature>
<feature type="helix" evidence="9">
    <location>
        <begin position="210"/>
        <end position="215"/>
    </location>
</feature>
<feature type="helix" evidence="9">
    <location>
        <begin position="218"/>
        <end position="220"/>
    </location>
</feature>
<feature type="strand" evidence="9">
    <location>
        <begin position="223"/>
        <end position="227"/>
    </location>
</feature>
<feature type="helix" evidence="9">
    <location>
        <begin position="233"/>
        <end position="235"/>
    </location>
</feature>
<feature type="helix" evidence="9">
    <location>
        <begin position="246"/>
        <end position="254"/>
    </location>
</feature>
<feature type="helix" evidence="9">
    <location>
        <begin position="255"/>
        <end position="257"/>
    </location>
</feature>
<feature type="strand" evidence="9">
    <location>
        <begin position="261"/>
        <end position="271"/>
    </location>
</feature>
<feature type="helix" evidence="9">
    <location>
        <begin position="273"/>
        <end position="284"/>
    </location>
</feature>
<feature type="turn" evidence="9">
    <location>
        <begin position="285"/>
        <end position="288"/>
    </location>
</feature>
<feature type="strand" evidence="9">
    <location>
        <begin position="291"/>
        <end position="296"/>
    </location>
</feature>
<feature type="helix" evidence="9">
    <location>
        <begin position="301"/>
        <end position="304"/>
    </location>
</feature>
<feature type="helix" evidence="9">
    <location>
        <begin position="306"/>
        <end position="309"/>
    </location>
</feature>
<feature type="helix" evidence="9">
    <location>
        <begin position="314"/>
        <end position="323"/>
    </location>
</feature>
<feature type="strand" evidence="9">
    <location>
        <begin position="327"/>
        <end position="329"/>
    </location>
</feature>
<feature type="helix" evidence="9">
    <location>
        <begin position="331"/>
        <end position="337"/>
    </location>
</feature>
<feature type="helix" evidence="9">
    <location>
        <begin position="338"/>
        <end position="341"/>
    </location>
</feature>
<feature type="turn" evidence="9">
    <location>
        <begin position="343"/>
        <end position="350"/>
    </location>
</feature>
<feature type="strand" evidence="9">
    <location>
        <begin position="354"/>
        <end position="356"/>
    </location>
</feature>
<feature type="strand" evidence="9">
    <location>
        <begin position="358"/>
        <end position="363"/>
    </location>
</feature>
<feature type="strand" evidence="9">
    <location>
        <begin position="367"/>
        <end position="369"/>
    </location>
</feature>
<feature type="helix" evidence="9">
    <location>
        <begin position="371"/>
        <end position="379"/>
    </location>
</feature>
<feature type="strand" evidence="9">
    <location>
        <begin position="385"/>
        <end position="389"/>
    </location>
</feature>
<feature type="helix" evidence="9">
    <location>
        <begin position="394"/>
        <end position="413"/>
    </location>
</feature>
<accession>Q8DF91</accession>
<evidence type="ECO:0000255" key="1">
    <source>
        <dbReference type="HAMAP-Rule" id="MF_01063"/>
    </source>
</evidence>
<evidence type="ECO:0000269" key="2">
    <source>
    </source>
</evidence>
<evidence type="ECO:0000269" key="3">
    <source>
    </source>
</evidence>
<evidence type="ECO:0000269" key="4">
    <source>
    </source>
</evidence>
<evidence type="ECO:0000303" key="5">
    <source>
    </source>
</evidence>
<evidence type="ECO:0000305" key="6"/>
<evidence type="ECO:0007744" key="7">
    <source>
        <dbReference type="PDB" id="3MVE"/>
    </source>
</evidence>
<evidence type="ECO:0007744" key="8">
    <source>
        <dbReference type="PDB" id="3OUR"/>
    </source>
</evidence>
<evidence type="ECO:0007829" key="9">
    <source>
        <dbReference type="PDB" id="3MVE"/>
    </source>
</evidence>
<evidence type="ECO:0007829" key="10">
    <source>
        <dbReference type="PDB" id="3OUR"/>
    </source>
</evidence>
<reference key="1">
    <citation type="submission" date="2002-12" db="EMBL/GenBank/DDBJ databases">
        <title>Complete genome sequence of Vibrio vulnificus CMCP6.</title>
        <authorList>
            <person name="Rhee J.H."/>
            <person name="Kim S.Y."/>
            <person name="Chung S.S."/>
            <person name="Kim J.J."/>
            <person name="Moon Y.H."/>
            <person name="Jeong H."/>
            <person name="Choy H.E."/>
        </authorList>
    </citation>
    <scope>NUCLEOTIDE SEQUENCE [LARGE SCALE GENOMIC DNA]</scope>
    <source>
        <strain>CMCP6</strain>
    </source>
</reference>
<reference key="2">
    <citation type="journal article" date="2013" name="Biochemistry">
        <title>Computational, structural, and kinetic evidence that Vibrio vulnificus FrsA is not a cofactor-independent pyruvate decarboxylase.</title>
        <authorList>
            <person name="Kellett W.F."/>
            <person name="Brunk E."/>
            <person name="Desai B.J."/>
            <person name="Fedorov A.A."/>
            <person name="Almo S.C."/>
            <person name="Gerlt J.A."/>
            <person name="Rothlisberger U."/>
            <person name="Richards N.G."/>
        </authorList>
    </citation>
    <scope>SHOWS THAT IS DOES NOT HAVE PYRUVATE DECARBOXYLASE ACTIVITY</scope>
</reference>
<reference key="3">
    <citation type="journal article" date="2019" name="PLoS ONE">
        <title>Purification and biochemical characterization of FrsA protein from Vibrio vulnificus as an esterase.</title>
        <authorList>
            <person name="Wang X."/>
            <person name="Li Z.M."/>
            <person name="Li Q."/>
            <person name="Shi M."/>
            <person name="Bao L."/>
            <person name="Xu D."/>
            <person name="Li Z."/>
        </authorList>
    </citation>
    <scope>FUNCTION</scope>
    <scope>CATALYTIC ACTIVITY</scope>
    <scope>BIOPHYSICOCHEMICAL PROPERTIES</scope>
    <scope>SUBUNIT</scope>
</reference>
<reference evidence="7 8" key="4">
    <citation type="journal article" date="2011" name="Nat. Chem. Biol.">
        <title>FrsA functions as a cofactor-independent decarboxylase to control metabolic flux.</title>
        <authorList>
            <person name="Lee K.J."/>
            <person name="Jeong C.S."/>
            <person name="An Y.J."/>
            <person name="Lee H.J."/>
            <person name="Park S.J."/>
            <person name="Seok Y.J."/>
            <person name="Kim P."/>
            <person name="Lee J.H."/>
            <person name="Lee K.H."/>
            <person name="Cha S.S."/>
        </authorList>
    </citation>
    <scope>X-RAY CRYSTALLOGRAPHY (2.20 ANGSTROMS) OF APOPROTEIN AND IN COMPLEX WITH IIAGLC</scope>
    <scope>PRELIMINARY FUNCTION</scope>
    <scope>SUBUNIT</scope>
    <scope>INTERACTION WITH IIAGLC</scope>
    <source>
        <strain>MO6-24</strain>
    </source>
</reference>
<proteinExistence type="evidence at protein level"/>
<gene>
    <name evidence="1 5" type="primary">frsA</name>
    <name type="ordered locus">VV1_0328</name>
</gene>
<comment type="function">
    <text evidence="4">Catalyzes the hydrolysis of esters (PubMed:30951551). In vitro, prefers short chain alkanoate ester as substrate. Displays highest activity towards p-nitrophenyl acetate (pNPA). Has weaker activity towards p-nitrophenyl butyrate (pNPB) (PubMed:30951551).</text>
</comment>
<comment type="catalytic activity">
    <reaction evidence="1 4">
        <text>a carboxylic ester + H2O = an alcohol + a carboxylate + H(+)</text>
        <dbReference type="Rhea" id="RHEA:21164"/>
        <dbReference type="ChEBI" id="CHEBI:15377"/>
        <dbReference type="ChEBI" id="CHEBI:15378"/>
        <dbReference type="ChEBI" id="CHEBI:29067"/>
        <dbReference type="ChEBI" id="CHEBI:30879"/>
        <dbReference type="ChEBI" id="CHEBI:33308"/>
        <dbReference type="EC" id="3.1.1.1"/>
    </reaction>
</comment>
<comment type="biophysicochemical properties">
    <kinetics>
        <KM evidence="4">18.6 mM for pNPA</KM>
        <text evidence="4">kcat is 0.67 sec(-1) with pNPA as substrate.</text>
    </kinetics>
    <phDependence>
        <text evidence="4">Optimum pH is 9.0-9.5.</text>
    </phDependence>
    <temperatureDependence>
        <text evidence="4">Optimum temperature is 50 degrees Celsius.</text>
    </temperatureDependence>
</comment>
<comment type="subunit">
    <text evidence="2 4">Monomer in solution (PubMed:21623357). Homodimer (PubMed:30951551). Forms a 1:1 complex with the unphosphorylated form of the EIIA component of the glucose-specific PTS system (IIAGlc) (PubMed:21623357).</text>
</comment>
<comment type="similarity">
    <text evidence="1 6">Belongs to the FrsA family.</text>
</comment>
<comment type="caution">
    <text evidence="2 3">Was originally reported to catalyze the cofactor-independent decarboxylation of pyruvate (PubMed:21623357). In contrast, Kellett et al. demonstrated with computational, structural, and kinetic evidence that this enzyme does not exhibit pyruvate decarboxylase activity (PubMed:23452154).</text>
</comment>
<name>FRSA_VIBVU</name>
<organism>
    <name type="scientific">Vibrio vulnificus (strain CMCP6)</name>
    <dbReference type="NCBI Taxonomy" id="216895"/>
    <lineage>
        <taxon>Bacteria</taxon>
        <taxon>Pseudomonadati</taxon>
        <taxon>Pseudomonadota</taxon>
        <taxon>Gammaproteobacteria</taxon>
        <taxon>Vibrionales</taxon>
        <taxon>Vibrionaceae</taxon>
        <taxon>Vibrio</taxon>
    </lineage>
</organism>